<protein>
    <recommendedName>
        <fullName evidence="1">Pyridoxine 5'-phosphate synthase</fullName>
        <shortName evidence="1">PNP synthase</shortName>
        <ecNumber evidence="1">2.6.99.2</ecNumber>
    </recommendedName>
</protein>
<name>PDXJ_BRADU</name>
<organism>
    <name type="scientific">Bradyrhizobium diazoefficiens (strain JCM 10833 / BCRC 13528 / IAM 13628 / NBRC 14792 / USDA 110)</name>
    <dbReference type="NCBI Taxonomy" id="224911"/>
    <lineage>
        <taxon>Bacteria</taxon>
        <taxon>Pseudomonadati</taxon>
        <taxon>Pseudomonadota</taxon>
        <taxon>Alphaproteobacteria</taxon>
        <taxon>Hyphomicrobiales</taxon>
        <taxon>Nitrobacteraceae</taxon>
        <taxon>Bradyrhizobium</taxon>
    </lineage>
</organism>
<keyword id="KW-0963">Cytoplasm</keyword>
<keyword id="KW-0664">Pyridoxine biosynthesis</keyword>
<keyword id="KW-1185">Reference proteome</keyword>
<keyword id="KW-0808">Transferase</keyword>
<sequence length="250" mass="27033">MPASPLRLGVNVDHVATLRNARGGRNPDPVRAALLAIEAGADGITAHLREDRRHIRDEDMARLKAEISKPLNFEMAATDDMMRISLATRPHAVCLVPERRQEVTTEGGLDVVGQHNALAPYIARLNDAGIRVSLFIAADPAQIEMAARLRAPVIEIHTGAWCDAVVDGHTEKADAEWKRIVAGAKLAKDAGLEVHAGHGLDYATAETIAALPDIMELNIGYYMIGEALFVGLAETVRSMRAAMDRGRSRA</sequence>
<comment type="function">
    <text evidence="1">Catalyzes the complicated ring closure reaction between the two acyclic compounds 1-deoxy-D-xylulose-5-phosphate (DXP) and 3-amino-2-oxopropyl phosphate (1-amino-acetone-3-phosphate or AAP) to form pyridoxine 5'-phosphate (PNP) and inorganic phosphate.</text>
</comment>
<comment type="catalytic activity">
    <reaction evidence="1">
        <text>3-amino-2-oxopropyl phosphate + 1-deoxy-D-xylulose 5-phosphate = pyridoxine 5'-phosphate + phosphate + 2 H2O + H(+)</text>
        <dbReference type="Rhea" id="RHEA:15265"/>
        <dbReference type="ChEBI" id="CHEBI:15377"/>
        <dbReference type="ChEBI" id="CHEBI:15378"/>
        <dbReference type="ChEBI" id="CHEBI:43474"/>
        <dbReference type="ChEBI" id="CHEBI:57279"/>
        <dbReference type="ChEBI" id="CHEBI:57792"/>
        <dbReference type="ChEBI" id="CHEBI:58589"/>
        <dbReference type="EC" id="2.6.99.2"/>
    </reaction>
</comment>
<comment type="pathway">
    <text evidence="1">Cofactor biosynthesis; pyridoxine 5'-phosphate biosynthesis; pyridoxine 5'-phosphate from D-erythrose 4-phosphate: step 5/5.</text>
</comment>
<comment type="subunit">
    <text evidence="1">Homooctamer; tetramer of dimers.</text>
</comment>
<comment type="subcellular location">
    <subcellularLocation>
        <location evidence="1">Cytoplasm</location>
    </subcellularLocation>
</comment>
<comment type="similarity">
    <text evidence="1">Belongs to the PNP synthase family.</text>
</comment>
<gene>
    <name evidence="1" type="primary">pdxJ</name>
    <name type="ordered locus">bll5064</name>
</gene>
<reference key="1">
    <citation type="submission" date="2000-01" db="EMBL/GenBank/DDBJ databases">
        <title>Extended DNA sequencing in the upstream region of sipF in Bradyrhizobium japonicum.</title>
        <authorList>
            <person name="Mueller P."/>
            <person name="Stingel D."/>
        </authorList>
    </citation>
    <scope>NUCLEOTIDE SEQUENCE [GENOMIC DNA]</scope>
    <source>
        <strain>USDA 110spc4</strain>
    </source>
</reference>
<reference key="2">
    <citation type="journal article" date="2002" name="DNA Res.">
        <title>Complete genomic sequence of nitrogen-fixing symbiotic bacterium Bradyrhizobium japonicum USDA110.</title>
        <authorList>
            <person name="Kaneko T."/>
            <person name="Nakamura Y."/>
            <person name="Sato S."/>
            <person name="Minamisawa K."/>
            <person name="Uchiumi T."/>
            <person name="Sasamoto S."/>
            <person name="Watanabe A."/>
            <person name="Idesawa K."/>
            <person name="Iriguchi M."/>
            <person name="Kawashima K."/>
            <person name="Kohara M."/>
            <person name="Matsumoto M."/>
            <person name="Shimpo S."/>
            <person name="Tsuruoka H."/>
            <person name="Wada T."/>
            <person name="Yamada M."/>
            <person name="Tabata S."/>
        </authorList>
    </citation>
    <scope>NUCLEOTIDE SEQUENCE [LARGE SCALE GENOMIC DNA]</scope>
    <source>
        <strain>JCM 10833 / BCRC 13528 / IAM 13628 / NBRC 14792 / USDA 110</strain>
    </source>
</reference>
<reference key="3">
    <citation type="journal article" date="1998" name="Mol. Gen. Genet.">
        <title>A second gene for type I signal peptidase in Bradyrhizobium japonicum, sipF, is located near genes involved in RNA processing and cell division.</title>
        <authorList>
            <person name="Bairl A."/>
            <person name="Mueller P."/>
        </authorList>
    </citation>
    <scope>NUCLEOTIDE SEQUENCE [GENOMIC DNA] OF 67-250</scope>
    <source>
        <strain>USDA 110spc4</strain>
    </source>
</reference>
<dbReference type="EC" id="2.6.99.2" evidence="1"/>
<dbReference type="EMBL" id="AF065159">
    <property type="protein sequence ID" value="AAD02936.2"/>
    <property type="molecule type" value="Genomic_DNA"/>
</dbReference>
<dbReference type="EMBL" id="BA000040">
    <property type="protein sequence ID" value="BAC50329.1"/>
    <property type="molecule type" value="Genomic_DNA"/>
</dbReference>
<dbReference type="RefSeq" id="NP_771704.1">
    <property type="nucleotide sequence ID" value="NC_004463.1"/>
</dbReference>
<dbReference type="RefSeq" id="WP_011087825.1">
    <property type="nucleotide sequence ID" value="NC_004463.1"/>
</dbReference>
<dbReference type="SMR" id="O69158"/>
<dbReference type="FunCoup" id="O69158">
    <property type="interactions" value="439"/>
</dbReference>
<dbReference type="STRING" id="224911.AAV28_22690"/>
<dbReference type="EnsemblBacteria" id="BAC50329">
    <property type="protein sequence ID" value="BAC50329"/>
    <property type="gene ID" value="BAC50329"/>
</dbReference>
<dbReference type="GeneID" id="46492071"/>
<dbReference type="KEGG" id="bja:bll5064"/>
<dbReference type="PATRIC" id="fig|224911.44.peg.4932"/>
<dbReference type="eggNOG" id="COG0854">
    <property type="taxonomic scope" value="Bacteria"/>
</dbReference>
<dbReference type="HOGENOM" id="CLU_074563_0_0_5"/>
<dbReference type="InParanoid" id="O69158"/>
<dbReference type="OrthoDB" id="9806590at2"/>
<dbReference type="PhylomeDB" id="O69158"/>
<dbReference type="UniPathway" id="UPA00244">
    <property type="reaction ID" value="UER00313"/>
</dbReference>
<dbReference type="Proteomes" id="UP000002526">
    <property type="component" value="Chromosome"/>
</dbReference>
<dbReference type="GO" id="GO:0005829">
    <property type="term" value="C:cytosol"/>
    <property type="evidence" value="ECO:0000318"/>
    <property type="project" value="GO_Central"/>
</dbReference>
<dbReference type="GO" id="GO:0033856">
    <property type="term" value="F:pyridoxine 5'-phosphate synthase activity"/>
    <property type="evidence" value="ECO:0000318"/>
    <property type="project" value="GO_Central"/>
</dbReference>
<dbReference type="GO" id="GO:0008615">
    <property type="term" value="P:pyridoxine biosynthetic process"/>
    <property type="evidence" value="ECO:0000318"/>
    <property type="project" value="GO_Central"/>
</dbReference>
<dbReference type="CDD" id="cd00003">
    <property type="entry name" value="PNPsynthase"/>
    <property type="match status" value="1"/>
</dbReference>
<dbReference type="FunFam" id="3.20.20.70:FF:000150">
    <property type="entry name" value="Pyridoxine 5'-phosphate synthase"/>
    <property type="match status" value="1"/>
</dbReference>
<dbReference type="Gene3D" id="3.20.20.70">
    <property type="entry name" value="Aldolase class I"/>
    <property type="match status" value="1"/>
</dbReference>
<dbReference type="HAMAP" id="MF_00279">
    <property type="entry name" value="PdxJ"/>
    <property type="match status" value="1"/>
</dbReference>
<dbReference type="InterPro" id="IPR013785">
    <property type="entry name" value="Aldolase_TIM"/>
</dbReference>
<dbReference type="InterPro" id="IPR004569">
    <property type="entry name" value="PyrdxlP_synth_PdxJ"/>
</dbReference>
<dbReference type="InterPro" id="IPR036130">
    <property type="entry name" value="Pyridoxine-5'_phos_synth"/>
</dbReference>
<dbReference type="NCBIfam" id="TIGR00559">
    <property type="entry name" value="pdxJ"/>
    <property type="match status" value="1"/>
</dbReference>
<dbReference type="NCBIfam" id="NF003624">
    <property type="entry name" value="PRK05265.1-2"/>
    <property type="match status" value="1"/>
</dbReference>
<dbReference type="NCBIfam" id="NF003625">
    <property type="entry name" value="PRK05265.1-3"/>
    <property type="match status" value="1"/>
</dbReference>
<dbReference type="NCBIfam" id="NF003627">
    <property type="entry name" value="PRK05265.1-5"/>
    <property type="match status" value="1"/>
</dbReference>
<dbReference type="PANTHER" id="PTHR30456">
    <property type="entry name" value="PYRIDOXINE 5'-PHOSPHATE SYNTHASE"/>
    <property type="match status" value="1"/>
</dbReference>
<dbReference type="PANTHER" id="PTHR30456:SF0">
    <property type="entry name" value="PYRIDOXINE 5'-PHOSPHATE SYNTHASE"/>
    <property type="match status" value="1"/>
</dbReference>
<dbReference type="Pfam" id="PF03740">
    <property type="entry name" value="PdxJ"/>
    <property type="match status" value="1"/>
</dbReference>
<dbReference type="SUPFAM" id="SSF63892">
    <property type="entry name" value="Pyridoxine 5'-phosphate synthase"/>
    <property type="match status" value="1"/>
</dbReference>
<evidence type="ECO:0000255" key="1">
    <source>
        <dbReference type="HAMAP-Rule" id="MF_00279"/>
    </source>
</evidence>
<evidence type="ECO:0000305" key="2"/>
<proteinExistence type="inferred from homology"/>
<feature type="chain" id="PRO_0000190108" description="Pyridoxine 5'-phosphate synthase">
    <location>
        <begin position="1"/>
        <end position="250"/>
    </location>
</feature>
<feature type="active site" description="Proton acceptor" evidence="1">
    <location>
        <position position="47"/>
    </location>
</feature>
<feature type="active site" description="Proton acceptor" evidence="1">
    <location>
        <position position="74"/>
    </location>
</feature>
<feature type="active site" description="Proton donor" evidence="1">
    <location>
        <position position="198"/>
    </location>
</feature>
<feature type="binding site" evidence="1">
    <location>
        <position position="11"/>
    </location>
    <ligand>
        <name>3-amino-2-oxopropyl phosphate</name>
        <dbReference type="ChEBI" id="CHEBI:57279"/>
    </ligand>
</feature>
<feature type="binding site" evidence="1">
    <location>
        <begin position="13"/>
        <end position="14"/>
    </location>
    <ligand>
        <name>1-deoxy-D-xylulose 5-phosphate</name>
        <dbReference type="ChEBI" id="CHEBI:57792"/>
    </ligand>
</feature>
<feature type="binding site" evidence="1">
    <location>
        <position position="22"/>
    </location>
    <ligand>
        <name>3-amino-2-oxopropyl phosphate</name>
        <dbReference type="ChEBI" id="CHEBI:57279"/>
    </ligand>
</feature>
<feature type="binding site" evidence="1">
    <location>
        <position position="49"/>
    </location>
    <ligand>
        <name>1-deoxy-D-xylulose 5-phosphate</name>
        <dbReference type="ChEBI" id="CHEBI:57792"/>
    </ligand>
</feature>
<feature type="binding site" evidence="1">
    <location>
        <position position="54"/>
    </location>
    <ligand>
        <name>1-deoxy-D-xylulose 5-phosphate</name>
        <dbReference type="ChEBI" id="CHEBI:57792"/>
    </ligand>
</feature>
<feature type="binding site" evidence="1">
    <location>
        <position position="104"/>
    </location>
    <ligand>
        <name>1-deoxy-D-xylulose 5-phosphate</name>
        <dbReference type="ChEBI" id="CHEBI:57792"/>
    </ligand>
</feature>
<feature type="binding site" evidence="1">
    <location>
        <position position="199"/>
    </location>
    <ligand>
        <name>3-amino-2-oxopropyl phosphate</name>
        <dbReference type="ChEBI" id="CHEBI:57279"/>
    </ligand>
</feature>
<feature type="binding site" evidence="1">
    <location>
        <begin position="220"/>
        <end position="221"/>
    </location>
    <ligand>
        <name>3-amino-2-oxopropyl phosphate</name>
        <dbReference type="ChEBI" id="CHEBI:57279"/>
    </ligand>
</feature>
<feature type="site" description="Transition state stabilizer" evidence="1">
    <location>
        <position position="155"/>
    </location>
</feature>
<feature type="sequence conflict" description="In Ref. 1 and 3." evidence="2" ref="1 3">
    <original>KL</original>
    <variation>NV</variation>
    <location>
        <begin position="185"/>
        <end position="186"/>
    </location>
</feature>
<feature type="sequence conflict" description="In Ref. 1 and 3." evidence="2" ref="1 3">
    <original>SMR</original>
    <variation>NA</variation>
    <location>
        <begin position="238"/>
        <end position="240"/>
    </location>
</feature>
<accession>O69158</accession>